<sequence length="447" mass="50732">MDGMKYIISLFFIFVFLEGSKTEQVKHSDTYCVFQDKKYRVGEKWHPYLEPYGLVYCVNCICSENGNVLCSRVRCPSLHCLSPVHIPHLCCPRCPDSLPPVNNKVTSKSCEYNGTTYQHGELFIAEGLFQNRQPNQCSQCSCSEGNVYCGLKTCPKLTCAFPVSVPDSCCRVCRGDAELSWEHADGDIFRQPANREARHSYLRSPYDPPPNRQAGGLPRFPGSRSHRGAVIDSQQASGTIVQIVINNKHKHGQVCVSNGKTYSHGESWHPNLRAFGIVECVLCTCNVTKQECKKIHCPNRYPCKYPQKIDGKCCKVCPEEPPSQNFDSKGSFCGEETMPVYESVFMEDGETTRKVALETERPPQVEVHVWTIQKGILQHFHIEKISKRMFGELHHFKLVTRTTLNQWKLFTEGEAQLSQMCSSQVCRTELEDLVQVLYLGRPEKDHC</sequence>
<name>CRDL1_MOUSE</name>
<proteinExistence type="evidence at protein level"/>
<protein>
    <recommendedName>
        <fullName>Chordin-like protein 1</fullName>
    </recommendedName>
    <alternativeName>
        <fullName>Neuralin-1</fullName>
    </alternativeName>
    <alternativeName>
        <fullName>Neurogenesin-1</fullName>
    </alternativeName>
    <alternativeName>
        <fullName>Ventroptin</fullName>
    </alternativeName>
</protein>
<comment type="function">
    <text evidence="1 5">Seems to antagonize the function of BMP4 by binding to it and preventing its interaction with receptors. Alters the fate commitment of neural stem cells from gliogenesis to neurogenesis. Contributes to neuronal differentiation of neural stem cells in the brain by preventing the adoption of a glial fate. May play a crucial role in dorsoventral axis formation (By similarity). Antagonizes the function of BMP7 and may thus play an important role in the embryonic bone formation. Shows no inhibitory effect on the inducing activity of BMP2. Plays a role during anterior segment eye development (By similarity).</text>
</comment>
<comment type="subcellular location">
    <subcellularLocation>
        <location evidence="8">Secreted</location>
    </subcellularLocation>
</comment>
<comment type="alternative products">
    <event type="alternative splicing"/>
    <isoform>
        <id>Q920C1-1</id>
        <name>Alpha</name>
        <sequence type="displayed"/>
    </isoform>
    <isoform>
        <id>Q920C1-2</id>
        <name>Beta</name>
        <sequence type="described" ref="VSP_001076 VSP_001077"/>
    </isoform>
</comment>
<comment type="tissue specificity">
    <text>Expressed in heart, brain, lung, liver, kidney and testis.</text>
</comment>
<comment type="developmental stage">
    <text evidence="5">Expression starts in the neural plate at mid-gastrulation. Later on its expression becomes restricted to discrete regions of the central nervous system and to derivatives of the neural crest cells. Expressed as well in the primordial cells of the skeleton in mice embryos at 13.5 dpc.</text>
</comment>
<comment type="PTM">
    <text evidence="5">May be glycosylated.</text>
</comment>
<organism>
    <name type="scientific">Mus musculus</name>
    <name type="common">Mouse</name>
    <dbReference type="NCBI Taxonomy" id="10090"/>
    <lineage>
        <taxon>Eukaryota</taxon>
        <taxon>Metazoa</taxon>
        <taxon>Chordata</taxon>
        <taxon>Craniata</taxon>
        <taxon>Vertebrata</taxon>
        <taxon>Euteleostomi</taxon>
        <taxon>Mammalia</taxon>
        <taxon>Eutheria</taxon>
        <taxon>Euarchontoglires</taxon>
        <taxon>Glires</taxon>
        <taxon>Rodentia</taxon>
        <taxon>Myomorpha</taxon>
        <taxon>Muroidea</taxon>
        <taxon>Muridae</taxon>
        <taxon>Murinae</taxon>
        <taxon>Mus</taxon>
        <taxon>Mus</taxon>
    </lineage>
</organism>
<feature type="signal peptide" evidence="2">
    <location>
        <begin position="1"/>
        <end position="22"/>
    </location>
</feature>
<feature type="chain" id="PRO_0000005369" description="Chordin-like protein 1">
    <location>
        <begin position="23"/>
        <end position="447"/>
    </location>
</feature>
<feature type="domain" description="VWFC 1" evidence="3">
    <location>
        <begin position="30"/>
        <end position="95"/>
    </location>
</feature>
<feature type="domain" description="VWFC 2" evidence="3">
    <location>
        <begin position="108"/>
        <end position="174"/>
    </location>
</feature>
<feature type="domain" description="VWFC 3" evidence="3">
    <location>
        <begin position="253"/>
        <end position="318"/>
    </location>
</feature>
<feature type="region of interest" description="Disordered" evidence="4">
    <location>
        <begin position="200"/>
        <end position="224"/>
    </location>
</feature>
<feature type="short sequence motif" description="Cell attachment site" evidence="2">
    <location>
        <begin position="174"/>
        <end position="176"/>
    </location>
</feature>
<feature type="glycosylation site" description="N-linked (GlcNAc...) asparagine" evidence="2">
    <location>
        <position position="113"/>
    </location>
</feature>
<feature type="glycosylation site" description="N-linked (GlcNAc...) asparagine" evidence="2">
    <location>
        <position position="286"/>
    </location>
</feature>
<feature type="splice variant" id="VSP_001076" description="In isoform Beta." evidence="6 7">
    <original>EEPPSQNFDSKGSFC</original>
    <variation>GKKAKGALAGGPAFG</variation>
    <location>
        <begin position="319"/>
        <end position="333"/>
    </location>
</feature>
<feature type="splice variant" id="VSP_001077" description="In isoform Beta." evidence="6 7">
    <location>
        <begin position="334"/>
        <end position="447"/>
    </location>
</feature>
<feature type="sequence conflict" description="In Ref. 2; AAG27460." evidence="8" ref="2">
    <original>N</original>
    <variation>S</variation>
    <location>
        <position position="211"/>
    </location>
</feature>
<dbReference type="EMBL" id="AF321853">
    <property type="protein sequence ID" value="AAK95586.1"/>
    <property type="molecule type" value="mRNA"/>
</dbReference>
<dbReference type="EMBL" id="AF296451">
    <property type="protein sequence ID" value="AAK71523.1"/>
    <property type="molecule type" value="mRNA"/>
</dbReference>
<dbReference type="EMBL" id="AF305714">
    <property type="protein sequence ID" value="AAG27460.1"/>
    <property type="molecule type" value="mRNA"/>
</dbReference>
<dbReference type="CCDS" id="CCDS30453.1">
    <molecule id="Q920C1-2"/>
</dbReference>
<dbReference type="CCDS" id="CCDS53208.1">
    <molecule id="Q920C1-1"/>
</dbReference>
<dbReference type="RefSeq" id="NP_001107857.1">
    <molecule id="Q920C1-1"/>
    <property type="nucleotide sequence ID" value="NM_001114385.1"/>
</dbReference>
<dbReference type="RefSeq" id="NP_112548.2">
    <molecule id="Q920C1-2"/>
    <property type="nucleotide sequence ID" value="NM_031258.3"/>
</dbReference>
<dbReference type="SMR" id="Q920C1"/>
<dbReference type="FunCoup" id="Q920C1">
    <property type="interactions" value="182"/>
</dbReference>
<dbReference type="STRING" id="10090.ENSMUSP00000108499"/>
<dbReference type="GlyCosmos" id="Q920C1">
    <property type="glycosylation" value="2 sites, No reported glycans"/>
</dbReference>
<dbReference type="GlyGen" id="Q920C1">
    <property type="glycosylation" value="2 sites, 1 N-linked glycan (1 site)"/>
</dbReference>
<dbReference type="iPTMnet" id="Q920C1"/>
<dbReference type="PhosphoSitePlus" id="Q920C1"/>
<dbReference type="PaxDb" id="10090-ENSMUSP00000074230"/>
<dbReference type="ProteomicsDB" id="283823">
    <molecule id="Q920C1-1"/>
</dbReference>
<dbReference type="ProteomicsDB" id="283824">
    <molecule id="Q920C1-2"/>
</dbReference>
<dbReference type="Antibodypedia" id="365">
    <property type="antibodies" value="297 antibodies from 28 providers"/>
</dbReference>
<dbReference type="DNASU" id="83453"/>
<dbReference type="Ensembl" id="ENSMUST00000063029.13">
    <molecule id="Q920C1-1"/>
    <property type="protein sequence ID" value="ENSMUSP00000056193.7"/>
    <property type="gene ID" value="ENSMUSG00000031283.18"/>
</dbReference>
<dbReference type="Ensembl" id="ENSMUST00000074660.12">
    <molecule id="Q920C1-2"/>
    <property type="protein sequence ID" value="ENSMUSP00000074230.6"/>
    <property type="gene ID" value="ENSMUSG00000031283.18"/>
</dbReference>
<dbReference type="Ensembl" id="ENSMUST00000112878.9">
    <molecule id="Q920C1-1"/>
    <property type="protein sequence ID" value="ENSMUSP00000108499.3"/>
    <property type="gene ID" value="ENSMUSG00000031283.18"/>
</dbReference>
<dbReference type="GeneID" id="83453"/>
<dbReference type="KEGG" id="mmu:83453"/>
<dbReference type="UCSC" id="uc009ume.2">
    <molecule id="Q920C1-1"/>
    <property type="organism name" value="mouse"/>
</dbReference>
<dbReference type="AGR" id="MGI:1933172"/>
<dbReference type="CTD" id="91851"/>
<dbReference type="MGI" id="MGI:1933172">
    <property type="gene designation" value="Chrdl1"/>
</dbReference>
<dbReference type="VEuPathDB" id="HostDB:ENSMUSG00000031283"/>
<dbReference type="eggNOG" id="ENOG502QQFQ">
    <property type="taxonomic scope" value="Eukaryota"/>
</dbReference>
<dbReference type="GeneTree" id="ENSGT00940000160983"/>
<dbReference type="HOGENOM" id="CLU_048288_0_0_1"/>
<dbReference type="InParanoid" id="Q920C1"/>
<dbReference type="OMA" id="PRCPXEG"/>
<dbReference type="OrthoDB" id="8173378at2759"/>
<dbReference type="PhylomeDB" id="Q920C1"/>
<dbReference type="Reactome" id="R-MMU-201451">
    <property type="pathway name" value="Signaling by BMP"/>
</dbReference>
<dbReference type="Reactome" id="R-MMU-381426">
    <property type="pathway name" value="Regulation of Insulin-like Growth Factor (IGF) transport and uptake by Insulin-like Growth Factor Binding Proteins (IGFBPs)"/>
</dbReference>
<dbReference type="Reactome" id="R-MMU-8957275">
    <property type="pathway name" value="Post-translational protein phosphorylation"/>
</dbReference>
<dbReference type="BioGRID-ORCS" id="83453">
    <property type="hits" value="2 hits in 77 CRISPR screens"/>
</dbReference>
<dbReference type="ChiTaRS" id="Chrdl1">
    <property type="organism name" value="mouse"/>
</dbReference>
<dbReference type="PRO" id="PR:Q920C1"/>
<dbReference type="Proteomes" id="UP000000589">
    <property type="component" value="Chromosome X"/>
</dbReference>
<dbReference type="RNAct" id="Q920C1">
    <property type="molecule type" value="protein"/>
</dbReference>
<dbReference type="Bgee" id="ENSMUSG00000031283">
    <property type="expression patterns" value="Expressed in sciatic nerve and 227 other cell types or tissues"/>
</dbReference>
<dbReference type="ExpressionAtlas" id="Q920C1">
    <property type="expression patterns" value="baseline and differential"/>
</dbReference>
<dbReference type="GO" id="GO:0005576">
    <property type="term" value="C:extracellular region"/>
    <property type="evidence" value="ECO:0000314"/>
    <property type="project" value="MGI"/>
</dbReference>
<dbReference type="GO" id="GO:0005886">
    <property type="term" value="C:plasma membrane"/>
    <property type="evidence" value="ECO:0007669"/>
    <property type="project" value="GOC"/>
</dbReference>
<dbReference type="GO" id="GO:0045202">
    <property type="term" value="C:synapse"/>
    <property type="evidence" value="ECO:0007669"/>
    <property type="project" value="GOC"/>
</dbReference>
<dbReference type="GO" id="GO:0036122">
    <property type="term" value="F:BMP binding"/>
    <property type="evidence" value="ECO:0000314"/>
    <property type="project" value="MGI"/>
</dbReference>
<dbReference type="GO" id="GO:0050431">
    <property type="term" value="F:transforming growth factor beta binding"/>
    <property type="evidence" value="ECO:0000314"/>
    <property type="project" value="MGI"/>
</dbReference>
<dbReference type="GO" id="GO:0097113">
    <property type="term" value="P:AMPA glutamate receptor clustering"/>
    <property type="evidence" value="ECO:0000315"/>
    <property type="project" value="MGI"/>
</dbReference>
<dbReference type="GO" id="GO:0030509">
    <property type="term" value="P:BMP signaling pathway"/>
    <property type="evidence" value="ECO:0000315"/>
    <property type="project" value="MGI"/>
</dbReference>
<dbReference type="GO" id="GO:0030154">
    <property type="term" value="P:cell differentiation"/>
    <property type="evidence" value="ECO:0007669"/>
    <property type="project" value="UniProtKB-KW"/>
</dbReference>
<dbReference type="GO" id="GO:0000578">
    <property type="term" value="P:embryonic axis specification"/>
    <property type="evidence" value="ECO:0000314"/>
    <property type="project" value="MGI"/>
</dbReference>
<dbReference type="GO" id="GO:0098976">
    <property type="term" value="P:excitatory chemical synaptic transmission"/>
    <property type="evidence" value="ECO:0000315"/>
    <property type="project" value="MGI"/>
</dbReference>
<dbReference type="GO" id="GO:0001654">
    <property type="term" value="P:eye development"/>
    <property type="evidence" value="ECO:0000250"/>
    <property type="project" value="UniProtKB"/>
</dbReference>
<dbReference type="GO" id="GO:0030514">
    <property type="term" value="P:negative regulation of BMP signaling pathway"/>
    <property type="evidence" value="ECO:0000314"/>
    <property type="project" value="MGI"/>
</dbReference>
<dbReference type="GO" id="GO:0001503">
    <property type="term" value="P:ossification"/>
    <property type="evidence" value="ECO:0007669"/>
    <property type="project" value="UniProtKB-KW"/>
</dbReference>
<dbReference type="GO" id="GO:0048167">
    <property type="term" value="P:regulation of synaptic plasticity"/>
    <property type="evidence" value="ECO:0000315"/>
    <property type="project" value="MGI"/>
</dbReference>
<dbReference type="GO" id="GO:0060074">
    <property type="term" value="P:synapse maturation"/>
    <property type="evidence" value="ECO:0000315"/>
    <property type="project" value="MGI"/>
</dbReference>
<dbReference type="FunFam" id="2.10.70.10:FF:000005">
    <property type="entry name" value="Chordin-like 1, isoform CRA_c"/>
    <property type="match status" value="2"/>
</dbReference>
<dbReference type="Gene3D" id="6.20.200.20">
    <property type="match status" value="1"/>
</dbReference>
<dbReference type="Gene3D" id="2.10.70.10">
    <property type="entry name" value="Complement Module, domain 1"/>
    <property type="match status" value="2"/>
</dbReference>
<dbReference type="InterPro" id="IPR045717">
    <property type="entry name" value="CHRDL1/2"/>
</dbReference>
<dbReference type="InterPro" id="IPR045716">
    <property type="entry name" value="CHRDL_1/2_C"/>
</dbReference>
<dbReference type="InterPro" id="IPR001007">
    <property type="entry name" value="VWF_dom"/>
</dbReference>
<dbReference type="PANTHER" id="PTHR46303:SF2">
    <property type="entry name" value="CHORDIN-LIKE PROTEIN 1"/>
    <property type="match status" value="1"/>
</dbReference>
<dbReference type="PANTHER" id="PTHR46303">
    <property type="entry name" value="VWFC DOMAIN-CONTAINING PROTEIN"/>
    <property type="match status" value="1"/>
</dbReference>
<dbReference type="Pfam" id="PF19548">
    <property type="entry name" value="CHRDL_1_2_C"/>
    <property type="match status" value="1"/>
</dbReference>
<dbReference type="Pfam" id="PF00093">
    <property type="entry name" value="VWC"/>
    <property type="match status" value="3"/>
</dbReference>
<dbReference type="SMART" id="SM00214">
    <property type="entry name" value="VWC"/>
    <property type="match status" value="3"/>
</dbReference>
<dbReference type="SUPFAM" id="SSF57603">
    <property type="entry name" value="FnI-like domain"/>
    <property type="match status" value="3"/>
</dbReference>
<dbReference type="PROSITE" id="PS01208">
    <property type="entry name" value="VWFC_1"/>
    <property type="match status" value="3"/>
</dbReference>
<dbReference type="PROSITE" id="PS50184">
    <property type="entry name" value="VWFC_2"/>
    <property type="match status" value="3"/>
</dbReference>
<evidence type="ECO:0000250" key="1"/>
<evidence type="ECO:0000255" key="2"/>
<evidence type="ECO:0000255" key="3">
    <source>
        <dbReference type="PROSITE-ProRule" id="PRU00220"/>
    </source>
</evidence>
<evidence type="ECO:0000256" key="4">
    <source>
        <dbReference type="SAM" id="MobiDB-lite"/>
    </source>
</evidence>
<evidence type="ECO:0000269" key="5">
    <source>
    </source>
</evidence>
<evidence type="ECO:0000303" key="6">
    <source>
    </source>
</evidence>
<evidence type="ECO:0000303" key="7">
    <source>
    </source>
</evidence>
<evidence type="ECO:0000305" key="8"/>
<gene>
    <name type="primary">Chrdl1</name>
    <name type="synonym">Ng1</name>
    <name type="synonym">Nrln1</name>
</gene>
<reference key="1">
    <citation type="journal article" date="2001" name="Science">
        <title>Ventroptin: a BMP-4 antagonist expressed in a double-gradient pattern in the retina.</title>
        <authorList>
            <person name="Sakuta H."/>
            <person name="Suzuki R."/>
            <person name="Takahashi H."/>
            <person name="Kato A."/>
            <person name="Shintani T."/>
            <person name="Iemura S."/>
            <person name="Yamamoto T.S."/>
            <person name="Ueno N."/>
            <person name="Noda M."/>
        </authorList>
    </citation>
    <scope>NUCLEOTIDE SEQUENCE [MRNA] (ISOFORMS ALPHA AND BETA)</scope>
    <source>
        <strain>C57BL/6J</strain>
    </source>
</reference>
<reference key="2">
    <citation type="journal article" date="2001" name="Mech. Dev.">
        <title>Neuralin-1 is a novel chordin-related molecule expressed in the mouse neural plate.</title>
        <authorList>
            <person name="Coffinier C.C."/>
            <person name="Tran U."/>
            <person name="Larrain J."/>
            <person name="De Robertis E.M."/>
        </authorList>
    </citation>
    <scope>NUCLEOTIDE SEQUENCE [MRNA] (ISOFORM BETA)</scope>
</reference>
<reference key="3">
    <citation type="journal article" date="2006" name="Biochem. Biophys. Res. Commun.">
        <title>Neurogenesin-1 differentially inhibits the osteoblastic differentiation by bone morphogenetic proteins in C2C12 cells.</title>
        <authorList>
            <person name="Chandra A."/>
            <person name="Itakura T."/>
            <person name="Yang Z."/>
            <person name="Tamakoshi T."/>
            <person name="Xue X."/>
            <person name="Wang B."/>
            <person name="Ueki T."/>
            <person name="Sato K."/>
            <person name="Uezato T."/>
            <person name="Miura N."/>
        </authorList>
    </citation>
    <scope>FUNCTION</scope>
    <scope>GLYCOSYLATION</scope>
    <scope>DEVELOPMENTAL STAGE</scope>
</reference>
<accession>Q920C1</accession>
<accession>Q924K0</accession>
<accession>Q9EPZ9</accession>
<keyword id="KW-0025">Alternative splicing</keyword>
<keyword id="KW-0217">Developmental protein</keyword>
<keyword id="KW-0221">Differentiation</keyword>
<keyword id="KW-0325">Glycoprotein</keyword>
<keyword id="KW-0524">Neurogenesis</keyword>
<keyword id="KW-0892">Osteogenesis</keyword>
<keyword id="KW-1185">Reference proteome</keyword>
<keyword id="KW-0677">Repeat</keyword>
<keyword id="KW-0964">Secreted</keyword>
<keyword id="KW-0732">Signal</keyword>